<proteinExistence type="evidence at protein level"/>
<name>PA2A2_WALAE</name>
<accession>C1IC45</accession>
<comment type="function">
    <text evidence="1 5">Snake venom phospholipase A2 (PLA2) that may act in the hemostasis system of the prey (By similarity). Exhibits hydrolytic activities, and prefers the anionic micelles (dPPC with deoxycholate) (54 umol/mg/min) to the zwitterionic micelles (dPPC with Triton X-100) (15 umol/mg/min). PLA2 catalyzes the calcium-dependent hydrolysis of the 2-acyl groups in 3-sn-phosphoglycerides.</text>
</comment>
<comment type="catalytic activity">
    <reaction evidence="3 4">
        <text>a 1,2-diacyl-sn-glycero-3-phosphocholine + H2O = a 1-acyl-sn-glycero-3-phosphocholine + a fatty acid + H(+)</text>
        <dbReference type="Rhea" id="RHEA:15801"/>
        <dbReference type="ChEBI" id="CHEBI:15377"/>
        <dbReference type="ChEBI" id="CHEBI:15378"/>
        <dbReference type="ChEBI" id="CHEBI:28868"/>
        <dbReference type="ChEBI" id="CHEBI:57643"/>
        <dbReference type="ChEBI" id="CHEBI:58168"/>
        <dbReference type="EC" id="3.1.1.4"/>
    </reaction>
</comment>
<comment type="cofactor">
    <cofactor evidence="1">
        <name>Ca(2+)</name>
        <dbReference type="ChEBI" id="CHEBI:29108"/>
    </cofactor>
    <text evidence="1">Binds 1 Ca(2+) ion.</text>
</comment>
<comment type="subcellular location">
    <subcellularLocation>
        <location>Secreted</location>
    </subcellularLocation>
</comment>
<comment type="tissue specificity">
    <text>Expressed by the venom gland.</text>
</comment>
<comment type="mass spectrometry"/>
<comment type="similarity">
    <text evidence="6">Belongs to the phospholipase A2 family. Group I subfamily. D49 sub-subfamily.</text>
</comment>
<keyword id="KW-0106">Calcium</keyword>
<keyword id="KW-1015">Disulfide bond</keyword>
<keyword id="KW-1199">Hemostasis impairing toxin</keyword>
<keyword id="KW-0378">Hydrolase</keyword>
<keyword id="KW-0442">Lipid degradation</keyword>
<keyword id="KW-0443">Lipid metabolism</keyword>
<keyword id="KW-0479">Metal-binding</keyword>
<keyword id="KW-0964">Secreted</keyword>
<keyword id="KW-0732">Signal</keyword>
<keyword id="KW-0800">Toxin</keyword>
<feature type="signal peptide" evidence="2">
    <location>
        <begin position="1" status="less than"/>
        <end position="17"/>
    </location>
</feature>
<feature type="chain" id="PRO_5000456110" description="Acidic phospholipase A2 PL-II">
    <location>
        <begin position="18"/>
        <end position="137"/>
    </location>
</feature>
<feature type="active site" evidence="1">
    <location>
        <position position="65"/>
    </location>
</feature>
<feature type="active site" evidence="1">
    <location>
        <position position="111"/>
    </location>
</feature>
<feature type="binding site" evidence="1">
    <location>
        <position position="45"/>
    </location>
    <ligand>
        <name>Ca(2+)</name>
        <dbReference type="ChEBI" id="CHEBI:29108"/>
    </ligand>
</feature>
<feature type="binding site" evidence="1">
    <location>
        <position position="47"/>
    </location>
    <ligand>
        <name>Ca(2+)</name>
        <dbReference type="ChEBI" id="CHEBI:29108"/>
    </ligand>
</feature>
<feature type="binding site" evidence="1">
    <location>
        <position position="49"/>
    </location>
    <ligand>
        <name>Ca(2+)</name>
        <dbReference type="ChEBI" id="CHEBI:29108"/>
    </ligand>
</feature>
<feature type="binding site" evidence="1">
    <location>
        <position position="66"/>
    </location>
    <ligand>
        <name>Ca(2+)</name>
        <dbReference type="ChEBI" id="CHEBI:29108"/>
    </ligand>
</feature>
<feature type="disulfide bond" evidence="1">
    <location>
        <begin position="28"/>
        <end position="89"/>
    </location>
</feature>
<feature type="disulfide bond" evidence="1">
    <location>
        <begin position="44"/>
        <end position="136"/>
    </location>
</feature>
<feature type="disulfide bond" evidence="1">
    <location>
        <begin position="46"/>
        <end position="62"/>
    </location>
</feature>
<feature type="disulfide bond" evidence="1">
    <location>
        <begin position="61"/>
        <end position="117"/>
    </location>
</feature>
<feature type="disulfide bond" evidence="1">
    <location>
        <begin position="68"/>
        <end position="110"/>
    </location>
</feature>
<feature type="disulfide bond" evidence="1">
    <location>
        <begin position="78"/>
        <end position="103"/>
    </location>
</feature>
<feature type="disulfide bond" evidence="1">
    <location>
        <begin position="96"/>
        <end position="108"/>
    </location>
</feature>
<feature type="non-terminal residue">
    <location>
        <position position="1"/>
    </location>
</feature>
<protein>
    <recommendedName>
        <fullName>Acidic phospholipase A2 PL-II</fullName>
        <shortName>svPLA2</shortName>
        <ecNumber>3.1.1.4</ecNumber>
    </recommendedName>
    <alternativeName>
        <fullName>Phosphatidylcholine 2-acylhydrolase</fullName>
    </alternativeName>
</protein>
<dbReference type="EC" id="3.1.1.4"/>
<dbReference type="EMBL" id="EU196553">
    <property type="protein sequence ID" value="ABX82862.1"/>
    <property type="molecule type" value="mRNA"/>
</dbReference>
<dbReference type="SMR" id="C1IC45"/>
<dbReference type="GO" id="GO:0005576">
    <property type="term" value="C:extracellular region"/>
    <property type="evidence" value="ECO:0007669"/>
    <property type="project" value="UniProtKB-SubCell"/>
</dbReference>
<dbReference type="GO" id="GO:0005509">
    <property type="term" value="F:calcium ion binding"/>
    <property type="evidence" value="ECO:0007669"/>
    <property type="project" value="InterPro"/>
</dbReference>
<dbReference type="GO" id="GO:0047498">
    <property type="term" value="F:calcium-dependent phospholipase A2 activity"/>
    <property type="evidence" value="ECO:0007669"/>
    <property type="project" value="TreeGrafter"/>
</dbReference>
<dbReference type="GO" id="GO:0005543">
    <property type="term" value="F:phospholipid binding"/>
    <property type="evidence" value="ECO:0007669"/>
    <property type="project" value="TreeGrafter"/>
</dbReference>
<dbReference type="GO" id="GO:0090729">
    <property type="term" value="F:toxin activity"/>
    <property type="evidence" value="ECO:0007669"/>
    <property type="project" value="UniProtKB-KW"/>
</dbReference>
<dbReference type="GO" id="GO:0050482">
    <property type="term" value="P:arachidonate secretion"/>
    <property type="evidence" value="ECO:0007669"/>
    <property type="project" value="InterPro"/>
</dbReference>
<dbReference type="GO" id="GO:0016042">
    <property type="term" value="P:lipid catabolic process"/>
    <property type="evidence" value="ECO:0007669"/>
    <property type="project" value="UniProtKB-KW"/>
</dbReference>
<dbReference type="GO" id="GO:0006644">
    <property type="term" value="P:phospholipid metabolic process"/>
    <property type="evidence" value="ECO:0007669"/>
    <property type="project" value="InterPro"/>
</dbReference>
<dbReference type="CDD" id="cd00125">
    <property type="entry name" value="PLA2c"/>
    <property type="match status" value="1"/>
</dbReference>
<dbReference type="FunFam" id="1.20.90.10:FF:000007">
    <property type="entry name" value="Acidic phospholipase A2"/>
    <property type="match status" value="1"/>
</dbReference>
<dbReference type="Gene3D" id="1.20.90.10">
    <property type="entry name" value="Phospholipase A2 domain"/>
    <property type="match status" value="1"/>
</dbReference>
<dbReference type="InterPro" id="IPR001211">
    <property type="entry name" value="PLipase_A2"/>
</dbReference>
<dbReference type="InterPro" id="IPR033112">
    <property type="entry name" value="PLipase_A2_Asp_AS"/>
</dbReference>
<dbReference type="InterPro" id="IPR016090">
    <property type="entry name" value="PLipase_A2_dom"/>
</dbReference>
<dbReference type="InterPro" id="IPR036444">
    <property type="entry name" value="PLipase_A2_dom_sf"/>
</dbReference>
<dbReference type="InterPro" id="IPR033113">
    <property type="entry name" value="PLipase_A2_His_AS"/>
</dbReference>
<dbReference type="PANTHER" id="PTHR11716:SF94">
    <property type="entry name" value="PHOSPHOLIPASE A2"/>
    <property type="match status" value="1"/>
</dbReference>
<dbReference type="PANTHER" id="PTHR11716">
    <property type="entry name" value="PHOSPHOLIPASE A2 FAMILY MEMBER"/>
    <property type="match status" value="1"/>
</dbReference>
<dbReference type="Pfam" id="PF00068">
    <property type="entry name" value="Phospholip_A2_1"/>
    <property type="match status" value="1"/>
</dbReference>
<dbReference type="PRINTS" id="PR00389">
    <property type="entry name" value="PHPHLIPASEA2"/>
</dbReference>
<dbReference type="SMART" id="SM00085">
    <property type="entry name" value="PA2c"/>
    <property type="match status" value="1"/>
</dbReference>
<dbReference type="SUPFAM" id="SSF48619">
    <property type="entry name" value="Phospholipase A2, PLA2"/>
    <property type="match status" value="1"/>
</dbReference>
<dbReference type="PROSITE" id="PS00119">
    <property type="entry name" value="PA2_ASP"/>
    <property type="match status" value="1"/>
</dbReference>
<dbReference type="PROSITE" id="PS00118">
    <property type="entry name" value="PA2_HIS"/>
    <property type="match status" value="1"/>
</dbReference>
<reference key="1">
    <citation type="journal article" date="2008" name="Toxicon">
        <title>Cloning, characterization and phylogenetic analyses of members of three major venom families from a single specimen of Walterinnesia aegyptia.</title>
        <authorList>
            <person name="Tsai H.-Y."/>
            <person name="Wang Y.M."/>
            <person name="Tsai I.-H."/>
        </authorList>
    </citation>
    <scope>NUCLEOTIDE SEQUENCE [MRNA]</scope>
    <scope>FUNCTION</scope>
    <scope>MASS SPECTROMETRY</scope>
    <source>
        <tissue>Venom</tissue>
        <tissue>Venom gland</tissue>
    </source>
</reference>
<organism>
    <name type="scientific">Walterinnesia aegyptia</name>
    <name type="common">Desert black snake</name>
    <dbReference type="NCBI Taxonomy" id="64182"/>
    <lineage>
        <taxon>Eukaryota</taxon>
        <taxon>Metazoa</taxon>
        <taxon>Chordata</taxon>
        <taxon>Craniata</taxon>
        <taxon>Vertebrata</taxon>
        <taxon>Euteleostomi</taxon>
        <taxon>Lepidosauria</taxon>
        <taxon>Squamata</taxon>
        <taxon>Bifurcata</taxon>
        <taxon>Unidentata</taxon>
        <taxon>Episquamata</taxon>
        <taxon>Toxicofera</taxon>
        <taxon>Serpentes</taxon>
        <taxon>Colubroidea</taxon>
        <taxon>Elapidae</taxon>
        <taxon>Elapinae</taxon>
        <taxon>Walterinnesia</taxon>
    </lineage>
</organism>
<sequence>AVCVSLLGASSIRPLPLHLGQFNNMIKCTIPGSTPWWDFSDYGCYCGYGGSGTPVDQLDRCCQTHDNCYTEAQKFSGCSPYRRKYSYECSEGTLTCKSDNDECAAFVCNCDRLAAICFAGAPYNSNNVDIDLEARCQ</sequence>
<evidence type="ECO:0000250" key="1"/>
<evidence type="ECO:0000255" key="2"/>
<evidence type="ECO:0000255" key="3">
    <source>
        <dbReference type="PROSITE-ProRule" id="PRU10035"/>
    </source>
</evidence>
<evidence type="ECO:0000255" key="4">
    <source>
        <dbReference type="PROSITE-ProRule" id="PRU10036"/>
    </source>
</evidence>
<evidence type="ECO:0000269" key="5">
    <source>
    </source>
</evidence>
<evidence type="ECO:0000305" key="6"/>